<keyword id="KW-0041">Annexin</keyword>
<keyword id="KW-0094">Blood coagulation</keyword>
<keyword id="KW-0106">Calcium</keyword>
<keyword id="KW-0111">Calcium/phospholipid-binding</keyword>
<keyword id="KW-0356">Hemostasis</keyword>
<keyword id="KW-0479">Metal-binding</keyword>
<keyword id="KW-1185">Reference proteome</keyword>
<keyword id="KW-0677">Repeat</keyword>
<reference key="1">
    <citation type="journal article" date="1998" name="Mamm. Genome">
        <title>The genetic origin of mouse annexin VIII.</title>
        <authorList>
            <person name="Fernandez M.-P."/>
            <person name="Copeland N.G."/>
            <person name="Gilbert D.J."/>
            <person name="Jenkins N.A."/>
            <person name="Morgan R.O."/>
        </authorList>
    </citation>
    <scope>NUCLEOTIDE SEQUENCE [MRNA]</scope>
    <source>
        <strain>C57BL/6J</strain>
        <tissue>Fetus</tissue>
    </source>
</reference>
<reference key="2">
    <citation type="journal article" date="2004" name="Genome Res.">
        <title>The status, quality, and expansion of the NIH full-length cDNA project: the Mammalian Gene Collection (MGC).</title>
        <authorList>
            <consortium name="The MGC Project Team"/>
        </authorList>
    </citation>
    <scope>NUCLEOTIDE SEQUENCE [LARGE SCALE MRNA]</scope>
    <source>
        <strain>FVB/N</strain>
        <tissue>Mammary tumor</tissue>
    </source>
</reference>
<reference key="3">
    <citation type="journal article" date="2010" name="Cell">
        <title>A tissue-specific atlas of mouse protein phosphorylation and expression.</title>
        <authorList>
            <person name="Huttlin E.L."/>
            <person name="Jedrychowski M.P."/>
            <person name="Elias J.E."/>
            <person name="Goswami T."/>
            <person name="Rad R."/>
            <person name="Beausoleil S.A."/>
            <person name="Villen J."/>
            <person name="Haas W."/>
            <person name="Sowa M.E."/>
            <person name="Gygi S.P."/>
        </authorList>
    </citation>
    <scope>IDENTIFICATION BY MASS SPECTROMETRY [LARGE SCALE ANALYSIS]</scope>
    <source>
        <tissue>Lung</tissue>
    </source>
</reference>
<feature type="chain" id="PRO_0000067504" description="Annexin A8">
    <location>
        <begin position="1"/>
        <end position="327"/>
    </location>
</feature>
<feature type="repeat" description="Annexin 1" evidence="2">
    <location>
        <begin position="21"/>
        <end position="92"/>
    </location>
</feature>
<feature type="repeat" description="Annexin 2" evidence="2">
    <location>
        <begin position="93"/>
        <end position="164"/>
    </location>
</feature>
<feature type="repeat" description="Annexin 3" evidence="2">
    <location>
        <begin position="177"/>
        <end position="249"/>
    </location>
</feature>
<feature type="repeat" description="Annexin 4" evidence="2">
    <location>
        <begin position="253"/>
        <end position="324"/>
    </location>
</feature>
<feature type="binding site" evidence="1">
    <location>
        <position position="266"/>
    </location>
    <ligand>
        <name>Ca(2+)</name>
        <dbReference type="ChEBI" id="CHEBI:29108"/>
    </ligand>
</feature>
<feature type="binding site" evidence="1">
    <location>
        <position position="268"/>
    </location>
    <ligand>
        <name>Ca(2+)</name>
        <dbReference type="ChEBI" id="CHEBI:29108"/>
    </ligand>
</feature>
<feature type="binding site" evidence="1">
    <location>
        <position position="270"/>
    </location>
    <ligand>
        <name>Ca(2+)</name>
        <dbReference type="ChEBI" id="CHEBI:29108"/>
    </ligand>
</feature>
<feature type="binding site" evidence="1">
    <location>
        <position position="310"/>
    </location>
    <ligand>
        <name>Ca(2+)</name>
        <dbReference type="ChEBI" id="CHEBI:29108"/>
    </ligand>
</feature>
<feature type="sequence conflict" description="In Ref. 1; CAA05364." evidence="3" ref="1">
    <original>S</original>
    <variation>T</variation>
    <location>
        <position position="14"/>
    </location>
</feature>
<feature type="sequence conflict" description="In Ref. 1; CAA05364." evidence="3" ref="1">
    <original>A</original>
    <variation>L</variation>
    <location>
        <position position="210"/>
    </location>
</feature>
<feature type="sequence conflict" description="In Ref. 1; CAA05364." evidence="3" ref="1">
    <original>N</original>
    <variation>D</variation>
    <location>
        <position position="225"/>
    </location>
</feature>
<feature type="sequence conflict" description="In Ref. 1; CAA05364." evidence="3" ref="1">
    <original>I</original>
    <variation>F</variation>
    <location>
        <position position="232"/>
    </location>
</feature>
<feature type="sequence conflict" description="In Ref. 1; CAA05364." evidence="3" ref="1">
    <original>K</original>
    <variation>R</variation>
    <location>
        <position position="296"/>
    </location>
</feature>
<dbReference type="EMBL" id="AJ002390">
    <property type="protein sequence ID" value="CAA05364.1"/>
    <property type="molecule type" value="mRNA"/>
</dbReference>
<dbReference type="EMBL" id="BC030407">
    <property type="protein sequence ID" value="AAH30407.1"/>
    <property type="molecule type" value="mRNA"/>
</dbReference>
<dbReference type="CCDS" id="CCDS26932.1"/>
<dbReference type="RefSeq" id="NP_001268774.1">
    <property type="nucleotide sequence ID" value="NM_001281845.1"/>
</dbReference>
<dbReference type="RefSeq" id="NP_038501.2">
    <property type="nucleotide sequence ID" value="NM_013473.4"/>
</dbReference>
<dbReference type="SMR" id="O35640"/>
<dbReference type="BioGRID" id="198114">
    <property type="interactions" value="1"/>
</dbReference>
<dbReference type="FunCoup" id="O35640">
    <property type="interactions" value="73"/>
</dbReference>
<dbReference type="STRING" id="10090.ENSMUSP00000022519"/>
<dbReference type="iPTMnet" id="O35640"/>
<dbReference type="PhosphoSitePlus" id="O35640"/>
<dbReference type="PaxDb" id="10090-ENSMUSP00000022519"/>
<dbReference type="PeptideAtlas" id="O35640"/>
<dbReference type="ProteomicsDB" id="296049"/>
<dbReference type="DNASU" id="11752"/>
<dbReference type="Ensembl" id="ENSMUST00000022519.15">
    <property type="protein sequence ID" value="ENSMUSP00000022519.9"/>
    <property type="gene ID" value="ENSMUSG00000021950.16"/>
</dbReference>
<dbReference type="GeneID" id="11752"/>
<dbReference type="KEGG" id="mmu:11752"/>
<dbReference type="UCSC" id="uc007taj.2">
    <property type="organism name" value="mouse"/>
</dbReference>
<dbReference type="AGR" id="MGI:1201374"/>
<dbReference type="CTD" id="653145"/>
<dbReference type="MGI" id="MGI:1201374">
    <property type="gene designation" value="Anxa8"/>
</dbReference>
<dbReference type="VEuPathDB" id="HostDB:ENSMUSG00000021950"/>
<dbReference type="eggNOG" id="KOG0819">
    <property type="taxonomic scope" value="Eukaryota"/>
</dbReference>
<dbReference type="GeneTree" id="ENSGT00940000161044"/>
<dbReference type="HOGENOM" id="CLU_025300_0_0_1"/>
<dbReference type="InParanoid" id="O35640"/>
<dbReference type="OMA" id="CYVEHDV"/>
<dbReference type="OrthoDB" id="37886at2759"/>
<dbReference type="PhylomeDB" id="O35640"/>
<dbReference type="TreeFam" id="TF105452"/>
<dbReference type="BioGRID-ORCS" id="11752">
    <property type="hits" value="1 hit in 80 CRISPR screens"/>
</dbReference>
<dbReference type="PRO" id="PR:O35640"/>
<dbReference type="Proteomes" id="UP000000589">
    <property type="component" value="Chromosome 14"/>
</dbReference>
<dbReference type="RNAct" id="O35640">
    <property type="molecule type" value="protein"/>
</dbReference>
<dbReference type="Bgee" id="ENSMUSG00000021950">
    <property type="expression patterns" value="Expressed in tail skin and 139 other cell types or tissues"/>
</dbReference>
<dbReference type="ExpressionAtlas" id="O35640">
    <property type="expression patterns" value="baseline and differential"/>
</dbReference>
<dbReference type="GO" id="GO:0005509">
    <property type="term" value="F:calcium ion binding"/>
    <property type="evidence" value="ECO:0007669"/>
    <property type="project" value="InterPro"/>
</dbReference>
<dbReference type="GO" id="GO:0005544">
    <property type="term" value="F:calcium-dependent phospholipid binding"/>
    <property type="evidence" value="ECO:0007669"/>
    <property type="project" value="UniProtKB-KW"/>
</dbReference>
<dbReference type="GO" id="GO:0007596">
    <property type="term" value="P:blood coagulation"/>
    <property type="evidence" value="ECO:0007669"/>
    <property type="project" value="UniProtKB-KW"/>
</dbReference>
<dbReference type="FunFam" id="1.10.220.10:FF:000001">
    <property type="entry name" value="Annexin"/>
    <property type="match status" value="1"/>
</dbReference>
<dbReference type="FunFam" id="1.10.220.10:FF:000002">
    <property type="entry name" value="Annexin"/>
    <property type="match status" value="1"/>
</dbReference>
<dbReference type="FunFam" id="1.10.220.10:FF:000003">
    <property type="entry name" value="Annexin"/>
    <property type="match status" value="1"/>
</dbReference>
<dbReference type="FunFam" id="1.10.220.10:FF:000004">
    <property type="entry name" value="Annexin"/>
    <property type="match status" value="1"/>
</dbReference>
<dbReference type="Gene3D" id="1.10.220.10">
    <property type="entry name" value="Annexin"/>
    <property type="match status" value="4"/>
</dbReference>
<dbReference type="InterPro" id="IPR001464">
    <property type="entry name" value="Annexin"/>
</dbReference>
<dbReference type="InterPro" id="IPR018502">
    <property type="entry name" value="Annexin_repeat"/>
</dbReference>
<dbReference type="InterPro" id="IPR018252">
    <property type="entry name" value="Annexin_repeat_CS"/>
</dbReference>
<dbReference type="InterPro" id="IPR037104">
    <property type="entry name" value="Annexin_sf"/>
</dbReference>
<dbReference type="InterPro" id="IPR009115">
    <property type="entry name" value="ANX8"/>
</dbReference>
<dbReference type="PANTHER" id="PTHR10502">
    <property type="entry name" value="ANNEXIN"/>
    <property type="match status" value="1"/>
</dbReference>
<dbReference type="PANTHER" id="PTHR10502:SF133">
    <property type="entry name" value="ANNEXIN A8-RELATED"/>
    <property type="match status" value="1"/>
</dbReference>
<dbReference type="Pfam" id="PF00191">
    <property type="entry name" value="Annexin"/>
    <property type="match status" value="4"/>
</dbReference>
<dbReference type="PRINTS" id="PR00196">
    <property type="entry name" value="ANNEXIN"/>
</dbReference>
<dbReference type="PRINTS" id="PR01808">
    <property type="entry name" value="ANNEXINVIII"/>
</dbReference>
<dbReference type="SMART" id="SM00335">
    <property type="entry name" value="ANX"/>
    <property type="match status" value="4"/>
</dbReference>
<dbReference type="SUPFAM" id="SSF47874">
    <property type="entry name" value="Annexin"/>
    <property type="match status" value="1"/>
</dbReference>
<dbReference type="PROSITE" id="PS00223">
    <property type="entry name" value="ANNEXIN_1"/>
    <property type="match status" value="4"/>
</dbReference>
<dbReference type="PROSITE" id="PS51897">
    <property type="entry name" value="ANNEXIN_2"/>
    <property type="match status" value="4"/>
</dbReference>
<evidence type="ECO:0000250" key="1"/>
<evidence type="ECO:0000255" key="2">
    <source>
        <dbReference type="PROSITE-ProRule" id="PRU01245"/>
    </source>
</evidence>
<evidence type="ECO:0000305" key="3"/>
<comment type="function">
    <text evidence="1">This protein is an anticoagulant protein that acts as an indirect inhibitor of the thromboplastin-specific complex, which is involved in the blood coagulation cascade.</text>
</comment>
<comment type="domain">
    <text>A pair of annexin repeats may form one binding site for calcium and phospholipid.</text>
</comment>
<comment type="similarity">
    <text evidence="2 3">Belongs to the annexin family.</text>
</comment>
<organism>
    <name type="scientific">Mus musculus</name>
    <name type="common">Mouse</name>
    <dbReference type="NCBI Taxonomy" id="10090"/>
    <lineage>
        <taxon>Eukaryota</taxon>
        <taxon>Metazoa</taxon>
        <taxon>Chordata</taxon>
        <taxon>Craniata</taxon>
        <taxon>Vertebrata</taxon>
        <taxon>Euteleostomi</taxon>
        <taxon>Mammalia</taxon>
        <taxon>Eutheria</taxon>
        <taxon>Euarchontoglires</taxon>
        <taxon>Glires</taxon>
        <taxon>Rodentia</taxon>
        <taxon>Myomorpha</taxon>
        <taxon>Muroidea</taxon>
        <taxon>Muridae</taxon>
        <taxon>Murinae</taxon>
        <taxon>Mus</taxon>
        <taxon>Mus</taxon>
    </lineage>
</organism>
<sequence length="327" mass="36724">MAWWKAWVEQEGVSVKGSSHFNPDPDAETLYKAMKGIGTNEQAIIDVLTKRSNVQRQQIAKSFKAQFGKDLTETLKSELSGKFERLIVALMYPPYSYEAKELHDAMKGLGTKEGVIIEILASRTKNQLREIMKAYEEDYGSTLEEDIQGDTSGYLERILVCLLQGSRDDVSGFVDPGLVLQDAQALHEAGEKIMGTDEMKFITILCTRSATHLMRVFEEYEKIANKCIEDSIKSETHGSLEEAMLTVVKCTRNVHSYFAERLYYAMKGAGTRDGTLIRNIVSRSEIDLNLIKGQFKKMYGKTLSSMIMADTSGYYKTALLNLVGTDL</sequence>
<proteinExistence type="evidence at protein level"/>
<gene>
    <name type="primary">Anxa8</name>
    <name type="synonym">Anx8</name>
</gene>
<protein>
    <recommendedName>
        <fullName>Annexin A8</fullName>
    </recommendedName>
    <alternativeName>
        <fullName>Annexin VIII</fullName>
    </alternativeName>
    <alternativeName>
        <fullName>Annexin-8</fullName>
    </alternativeName>
</protein>
<accession>O35640</accession>
<accession>Q8K2N9</accession>
<name>ANXA8_MOUSE</name>